<organism>
    <name type="scientific">Thermotoga sp. (strain RQ2)</name>
    <dbReference type="NCBI Taxonomy" id="126740"/>
    <lineage>
        <taxon>Bacteria</taxon>
        <taxon>Thermotogati</taxon>
        <taxon>Thermotogota</taxon>
        <taxon>Thermotogae</taxon>
        <taxon>Thermotogales</taxon>
        <taxon>Thermotogaceae</taxon>
        <taxon>Thermotoga</taxon>
    </lineage>
</organism>
<keyword id="KW-0687">Ribonucleoprotein</keyword>
<keyword id="KW-0689">Ribosomal protein</keyword>
<keyword id="KW-0694">RNA-binding</keyword>
<keyword id="KW-0699">rRNA-binding</keyword>
<keyword id="KW-0820">tRNA-binding</keyword>
<dbReference type="EMBL" id="CP000969">
    <property type="protein sequence ID" value="ACB09713.1"/>
    <property type="molecule type" value="Genomic_DNA"/>
</dbReference>
<dbReference type="RefSeq" id="WP_004081785.1">
    <property type="nucleotide sequence ID" value="NC_010483.1"/>
</dbReference>
<dbReference type="SMR" id="B1LBL5"/>
<dbReference type="KEGG" id="trq:TRQ2_1369"/>
<dbReference type="HOGENOM" id="CLU_103849_1_2_0"/>
<dbReference type="Proteomes" id="UP000001687">
    <property type="component" value="Chromosome"/>
</dbReference>
<dbReference type="GO" id="GO:0005829">
    <property type="term" value="C:cytosol"/>
    <property type="evidence" value="ECO:0007669"/>
    <property type="project" value="TreeGrafter"/>
</dbReference>
<dbReference type="GO" id="GO:0015935">
    <property type="term" value="C:small ribosomal subunit"/>
    <property type="evidence" value="ECO:0007669"/>
    <property type="project" value="TreeGrafter"/>
</dbReference>
<dbReference type="GO" id="GO:0019843">
    <property type="term" value="F:rRNA binding"/>
    <property type="evidence" value="ECO:0007669"/>
    <property type="project" value="UniProtKB-UniRule"/>
</dbReference>
<dbReference type="GO" id="GO:0003735">
    <property type="term" value="F:structural constituent of ribosome"/>
    <property type="evidence" value="ECO:0007669"/>
    <property type="project" value="InterPro"/>
</dbReference>
<dbReference type="GO" id="GO:0000049">
    <property type="term" value="F:tRNA binding"/>
    <property type="evidence" value="ECO:0007669"/>
    <property type="project" value="UniProtKB-UniRule"/>
</dbReference>
<dbReference type="GO" id="GO:0006412">
    <property type="term" value="P:translation"/>
    <property type="evidence" value="ECO:0007669"/>
    <property type="project" value="UniProtKB-UniRule"/>
</dbReference>
<dbReference type="FunFam" id="1.10.8.50:FF:000001">
    <property type="entry name" value="30S ribosomal protein S13"/>
    <property type="match status" value="1"/>
</dbReference>
<dbReference type="FunFam" id="4.10.910.10:FF:000001">
    <property type="entry name" value="30S ribosomal protein S13"/>
    <property type="match status" value="1"/>
</dbReference>
<dbReference type="Gene3D" id="1.10.8.50">
    <property type="match status" value="1"/>
</dbReference>
<dbReference type="Gene3D" id="4.10.910.10">
    <property type="entry name" value="30s ribosomal protein s13, domain 2"/>
    <property type="match status" value="1"/>
</dbReference>
<dbReference type="HAMAP" id="MF_01315">
    <property type="entry name" value="Ribosomal_uS13"/>
    <property type="match status" value="1"/>
</dbReference>
<dbReference type="InterPro" id="IPR027437">
    <property type="entry name" value="Rbsml_uS13_C"/>
</dbReference>
<dbReference type="InterPro" id="IPR001892">
    <property type="entry name" value="Ribosomal_uS13"/>
</dbReference>
<dbReference type="InterPro" id="IPR010979">
    <property type="entry name" value="Ribosomal_uS13-like_H2TH"/>
</dbReference>
<dbReference type="InterPro" id="IPR019980">
    <property type="entry name" value="Ribosomal_uS13_bac-type"/>
</dbReference>
<dbReference type="InterPro" id="IPR018269">
    <property type="entry name" value="Ribosomal_uS13_CS"/>
</dbReference>
<dbReference type="NCBIfam" id="TIGR03631">
    <property type="entry name" value="uS13_bact"/>
    <property type="match status" value="1"/>
</dbReference>
<dbReference type="PANTHER" id="PTHR10871">
    <property type="entry name" value="30S RIBOSOMAL PROTEIN S13/40S RIBOSOMAL PROTEIN S18"/>
    <property type="match status" value="1"/>
</dbReference>
<dbReference type="PANTHER" id="PTHR10871:SF1">
    <property type="entry name" value="SMALL RIBOSOMAL SUBUNIT PROTEIN US13M"/>
    <property type="match status" value="1"/>
</dbReference>
<dbReference type="Pfam" id="PF00416">
    <property type="entry name" value="Ribosomal_S13"/>
    <property type="match status" value="1"/>
</dbReference>
<dbReference type="PIRSF" id="PIRSF002134">
    <property type="entry name" value="Ribosomal_S13"/>
    <property type="match status" value="1"/>
</dbReference>
<dbReference type="SUPFAM" id="SSF46946">
    <property type="entry name" value="S13-like H2TH domain"/>
    <property type="match status" value="1"/>
</dbReference>
<dbReference type="PROSITE" id="PS00646">
    <property type="entry name" value="RIBOSOMAL_S13_1"/>
    <property type="match status" value="1"/>
</dbReference>
<dbReference type="PROSITE" id="PS50159">
    <property type="entry name" value="RIBOSOMAL_S13_2"/>
    <property type="match status" value="1"/>
</dbReference>
<accession>B1LBL5</accession>
<evidence type="ECO:0000255" key="1">
    <source>
        <dbReference type="HAMAP-Rule" id="MF_01315"/>
    </source>
</evidence>
<evidence type="ECO:0000256" key="2">
    <source>
        <dbReference type="SAM" id="MobiDB-lite"/>
    </source>
</evidence>
<evidence type="ECO:0000305" key="3"/>
<feature type="chain" id="PRO_1000141323" description="Small ribosomal subunit protein uS13">
    <location>
        <begin position="1"/>
        <end position="125"/>
    </location>
</feature>
<feature type="region of interest" description="Disordered" evidence="2">
    <location>
        <begin position="97"/>
        <end position="125"/>
    </location>
</feature>
<feature type="compositionally biased region" description="Basic residues" evidence="2">
    <location>
        <begin position="101"/>
        <end position="125"/>
    </location>
</feature>
<name>RS13_THESQ</name>
<proteinExistence type="inferred from homology"/>
<reference key="1">
    <citation type="journal article" date="2011" name="J. Bacteriol.">
        <title>Genome sequence of Thermotoga sp. strain RQ2, a hyperthermophilic bacterium isolated from a geothermally heated region of the seafloor near Ribeira Quente, the Azores.</title>
        <authorList>
            <person name="Swithers K.S."/>
            <person name="DiPippo J.L."/>
            <person name="Bruce D.C."/>
            <person name="Detter C."/>
            <person name="Tapia R."/>
            <person name="Han S."/>
            <person name="Saunders E."/>
            <person name="Goodwin L.A."/>
            <person name="Han J."/>
            <person name="Woyke T."/>
            <person name="Pitluck S."/>
            <person name="Pennacchio L."/>
            <person name="Nolan M."/>
            <person name="Mikhailova N."/>
            <person name="Lykidis A."/>
            <person name="Land M.L."/>
            <person name="Brettin T."/>
            <person name="Stetter K.O."/>
            <person name="Nelson K.E."/>
            <person name="Gogarten J.P."/>
            <person name="Noll K.M."/>
        </authorList>
    </citation>
    <scope>NUCLEOTIDE SEQUENCE [LARGE SCALE GENOMIC DNA]</scope>
    <source>
        <strain>RQ2</strain>
    </source>
</reference>
<gene>
    <name evidence="1" type="primary">rpsM</name>
    <name type="ordered locus">TRQ2_1369</name>
</gene>
<sequence>MARIVGVELPNNKKVWVALTYIYGIGRSRSFEILKNTGIDPEKRVGDLTDEEISKITKYIQDHFKVEGELRSEVERNIRRLIEIGCYRGIRHKLGLPVRGQKTRSNARTRKGPRPSRIKTKKKSS</sequence>
<comment type="function">
    <text evidence="1">Located at the top of the head of the 30S subunit, it contacts several helices of the 16S rRNA. In the 70S ribosome it contacts the 23S rRNA (bridge B1a) and protein L5 of the 50S subunit (bridge B1b), connecting the 2 subunits; these bridges are implicated in subunit movement. Contacts the tRNAs in the A and P-sites.</text>
</comment>
<comment type="subunit">
    <text evidence="1">Part of the 30S ribosomal subunit. Forms a loose heterodimer with protein S19. Forms two bridges to the 50S subunit in the 70S ribosome.</text>
</comment>
<comment type="similarity">
    <text evidence="1">Belongs to the universal ribosomal protein uS13 family.</text>
</comment>
<protein>
    <recommendedName>
        <fullName evidence="1">Small ribosomal subunit protein uS13</fullName>
    </recommendedName>
    <alternativeName>
        <fullName evidence="3">30S ribosomal protein S13</fullName>
    </alternativeName>
</protein>